<dbReference type="EC" id="2.1.1.74" evidence="1"/>
<dbReference type="EMBL" id="CP000252">
    <property type="protein sequence ID" value="ABC77250.1"/>
    <property type="molecule type" value="Genomic_DNA"/>
</dbReference>
<dbReference type="RefSeq" id="WP_011417279.1">
    <property type="nucleotide sequence ID" value="NC_007759.1"/>
</dbReference>
<dbReference type="SMR" id="Q2LT41"/>
<dbReference type="STRING" id="56780.SYN_02799"/>
<dbReference type="KEGG" id="sat:SYN_02799"/>
<dbReference type="eggNOG" id="COG1206">
    <property type="taxonomic scope" value="Bacteria"/>
</dbReference>
<dbReference type="HOGENOM" id="CLU_033057_1_0_7"/>
<dbReference type="InParanoid" id="Q2LT41"/>
<dbReference type="OrthoDB" id="9803114at2"/>
<dbReference type="Proteomes" id="UP000001933">
    <property type="component" value="Chromosome"/>
</dbReference>
<dbReference type="GO" id="GO:0005829">
    <property type="term" value="C:cytosol"/>
    <property type="evidence" value="ECO:0007669"/>
    <property type="project" value="TreeGrafter"/>
</dbReference>
<dbReference type="GO" id="GO:0050660">
    <property type="term" value="F:flavin adenine dinucleotide binding"/>
    <property type="evidence" value="ECO:0007669"/>
    <property type="project" value="UniProtKB-UniRule"/>
</dbReference>
<dbReference type="GO" id="GO:0047151">
    <property type="term" value="F:tRNA (uracil(54)-C5)-methyltransferase activity, 5,10-methylenetetrahydrofolate-dependent"/>
    <property type="evidence" value="ECO:0007669"/>
    <property type="project" value="UniProtKB-UniRule"/>
</dbReference>
<dbReference type="GO" id="GO:0030488">
    <property type="term" value="P:tRNA methylation"/>
    <property type="evidence" value="ECO:0007669"/>
    <property type="project" value="TreeGrafter"/>
</dbReference>
<dbReference type="GO" id="GO:0002098">
    <property type="term" value="P:tRNA wobble uridine modification"/>
    <property type="evidence" value="ECO:0007669"/>
    <property type="project" value="TreeGrafter"/>
</dbReference>
<dbReference type="Gene3D" id="3.50.50.60">
    <property type="entry name" value="FAD/NAD(P)-binding domain"/>
    <property type="match status" value="2"/>
</dbReference>
<dbReference type="HAMAP" id="MF_01037">
    <property type="entry name" value="TrmFO"/>
    <property type="match status" value="1"/>
</dbReference>
<dbReference type="InterPro" id="IPR036188">
    <property type="entry name" value="FAD/NAD-bd_sf"/>
</dbReference>
<dbReference type="InterPro" id="IPR002218">
    <property type="entry name" value="MnmG-rel"/>
</dbReference>
<dbReference type="InterPro" id="IPR040131">
    <property type="entry name" value="MnmG_N"/>
</dbReference>
<dbReference type="InterPro" id="IPR004417">
    <property type="entry name" value="TrmFO"/>
</dbReference>
<dbReference type="NCBIfam" id="TIGR00137">
    <property type="entry name" value="gid_trmFO"/>
    <property type="match status" value="1"/>
</dbReference>
<dbReference type="NCBIfam" id="NF003739">
    <property type="entry name" value="PRK05335.1"/>
    <property type="match status" value="1"/>
</dbReference>
<dbReference type="PANTHER" id="PTHR11806">
    <property type="entry name" value="GLUCOSE INHIBITED DIVISION PROTEIN A"/>
    <property type="match status" value="1"/>
</dbReference>
<dbReference type="PANTHER" id="PTHR11806:SF2">
    <property type="entry name" value="METHYLENETETRAHYDROFOLATE--TRNA-(URACIL-5-)-METHYLTRANSFERASE TRMFO"/>
    <property type="match status" value="1"/>
</dbReference>
<dbReference type="Pfam" id="PF01134">
    <property type="entry name" value="GIDA"/>
    <property type="match status" value="1"/>
</dbReference>
<dbReference type="SUPFAM" id="SSF51905">
    <property type="entry name" value="FAD/NAD(P)-binding domain"/>
    <property type="match status" value="1"/>
</dbReference>
<evidence type="ECO:0000255" key="1">
    <source>
        <dbReference type="HAMAP-Rule" id="MF_01037"/>
    </source>
</evidence>
<comment type="function">
    <text evidence="1">Catalyzes the folate-dependent formation of 5-methyl-uridine at position 54 (M-5-U54) in all tRNAs.</text>
</comment>
<comment type="catalytic activity">
    <reaction evidence="1">
        <text>uridine(54) in tRNA + (6R)-5,10-methylene-5,6,7,8-tetrahydrofolate + NADH + H(+) = 5-methyluridine(54) in tRNA + (6S)-5,6,7,8-tetrahydrofolate + NAD(+)</text>
        <dbReference type="Rhea" id="RHEA:16873"/>
        <dbReference type="Rhea" id="RHEA-COMP:10167"/>
        <dbReference type="Rhea" id="RHEA-COMP:10193"/>
        <dbReference type="ChEBI" id="CHEBI:15378"/>
        <dbReference type="ChEBI" id="CHEBI:15636"/>
        <dbReference type="ChEBI" id="CHEBI:57453"/>
        <dbReference type="ChEBI" id="CHEBI:57540"/>
        <dbReference type="ChEBI" id="CHEBI:57945"/>
        <dbReference type="ChEBI" id="CHEBI:65315"/>
        <dbReference type="ChEBI" id="CHEBI:74447"/>
        <dbReference type="EC" id="2.1.1.74"/>
    </reaction>
</comment>
<comment type="catalytic activity">
    <reaction evidence="1">
        <text>uridine(54) in tRNA + (6R)-5,10-methylene-5,6,7,8-tetrahydrofolate + NADPH + H(+) = 5-methyluridine(54) in tRNA + (6S)-5,6,7,8-tetrahydrofolate + NADP(+)</text>
        <dbReference type="Rhea" id="RHEA:62372"/>
        <dbReference type="Rhea" id="RHEA-COMP:10167"/>
        <dbReference type="Rhea" id="RHEA-COMP:10193"/>
        <dbReference type="ChEBI" id="CHEBI:15378"/>
        <dbReference type="ChEBI" id="CHEBI:15636"/>
        <dbReference type="ChEBI" id="CHEBI:57453"/>
        <dbReference type="ChEBI" id="CHEBI:57783"/>
        <dbReference type="ChEBI" id="CHEBI:58349"/>
        <dbReference type="ChEBI" id="CHEBI:65315"/>
        <dbReference type="ChEBI" id="CHEBI:74447"/>
        <dbReference type="EC" id="2.1.1.74"/>
    </reaction>
</comment>
<comment type="cofactor">
    <cofactor evidence="1">
        <name>FAD</name>
        <dbReference type="ChEBI" id="CHEBI:57692"/>
    </cofactor>
</comment>
<comment type="subcellular location">
    <subcellularLocation>
        <location evidence="1">Cytoplasm</location>
    </subcellularLocation>
</comment>
<comment type="similarity">
    <text evidence="1">Belongs to the MnmG family. TrmFO subfamily.</text>
</comment>
<name>TRMFO_SYNAS</name>
<reference key="1">
    <citation type="journal article" date="2007" name="Proc. Natl. Acad. Sci. U.S.A.">
        <title>The genome of Syntrophus aciditrophicus: life at the thermodynamic limit of microbial growth.</title>
        <authorList>
            <person name="McInerney M.J."/>
            <person name="Rohlin L."/>
            <person name="Mouttaki H."/>
            <person name="Kim U."/>
            <person name="Krupp R.S."/>
            <person name="Rios-Hernandez L."/>
            <person name="Sieber J."/>
            <person name="Struchtemeyer C.G."/>
            <person name="Bhattacharyya A."/>
            <person name="Campbell J.W."/>
            <person name="Gunsalus R.P."/>
        </authorList>
    </citation>
    <scope>NUCLEOTIDE SEQUENCE [LARGE SCALE GENOMIC DNA]</scope>
    <source>
        <strain>SB</strain>
    </source>
</reference>
<accession>Q2LT41</accession>
<feature type="chain" id="PRO_0000346414" description="Methylenetetrahydrofolate--tRNA-(uracil-5-)-methyltransferase TrmFO">
    <location>
        <begin position="1"/>
        <end position="441"/>
    </location>
</feature>
<feature type="binding site" evidence="1">
    <location>
        <begin position="11"/>
        <end position="16"/>
    </location>
    <ligand>
        <name>FAD</name>
        <dbReference type="ChEBI" id="CHEBI:57692"/>
    </ligand>
</feature>
<proteinExistence type="inferred from homology"/>
<gene>
    <name evidence="1" type="primary">trmFO</name>
    <name type="ordered locus">SYNAS_13710</name>
    <name type="ORF">SYN_02799</name>
</gene>
<organism>
    <name type="scientific">Syntrophus aciditrophicus (strain SB)</name>
    <dbReference type="NCBI Taxonomy" id="56780"/>
    <lineage>
        <taxon>Bacteria</taxon>
        <taxon>Pseudomonadati</taxon>
        <taxon>Thermodesulfobacteriota</taxon>
        <taxon>Syntrophia</taxon>
        <taxon>Syntrophales</taxon>
        <taxon>Syntrophaceae</taxon>
        <taxon>Syntrophus</taxon>
    </lineage>
</organism>
<sequence>MSKNDSIAIIGGGLAGCEAAWQLLNKGHSVTLYEMKPVNFSPAHRSSHLAELVCSNSLRSNIIENAAGTLKEEMRRMNSLIMSAADATSVPAGRALAVDRRAFSKFIEKKLKEFPKLTIIHQEITDIPADGLVIIATGPLTSDSLSQSIAGITGNSYLYFYDAISPVIEADSIDYEKVFRASRYDDDGQGDYLNCSMGKEEYELFWKTLTEGQTVSLRDFEDYKYFEGCLPIEVIAGRGVSTLLFGPMKPVGIVDPKTGKQPYAVIQLRQENREATLFNIVGFQTKLTWTEQRRIFRMIPGLGNAEFARYGSIHRNTFINSPALLEKTLQLKTAEHIFFAGQITGVEGYIESTAMGLMAGLSVSEFHKGKSFLPPPPETAMGALLNHITDTDSKQFQPMNINWGLVSPLPGKVKKRERGERYAHRALESLARWQSETSAEH</sequence>
<keyword id="KW-0963">Cytoplasm</keyword>
<keyword id="KW-0274">FAD</keyword>
<keyword id="KW-0285">Flavoprotein</keyword>
<keyword id="KW-0489">Methyltransferase</keyword>
<keyword id="KW-0520">NAD</keyword>
<keyword id="KW-0521">NADP</keyword>
<keyword id="KW-1185">Reference proteome</keyword>
<keyword id="KW-0808">Transferase</keyword>
<keyword id="KW-0819">tRNA processing</keyword>
<protein>
    <recommendedName>
        <fullName evidence="1">Methylenetetrahydrofolate--tRNA-(uracil-5-)-methyltransferase TrmFO</fullName>
        <ecNumber evidence="1">2.1.1.74</ecNumber>
    </recommendedName>
    <alternativeName>
        <fullName evidence="1">Folate-dependent tRNA (uracil-5-)-methyltransferase</fullName>
    </alternativeName>
    <alternativeName>
        <fullName evidence="1">Folate-dependent tRNA(M-5-U54)-methyltransferase</fullName>
    </alternativeName>
</protein>